<organism>
    <name type="scientific">Vanilla planifolia</name>
    <name type="common">Vanilla</name>
    <dbReference type="NCBI Taxonomy" id="51239"/>
    <lineage>
        <taxon>Eukaryota</taxon>
        <taxon>Viridiplantae</taxon>
        <taxon>Streptophyta</taxon>
        <taxon>Embryophyta</taxon>
        <taxon>Tracheophyta</taxon>
        <taxon>Spermatophyta</taxon>
        <taxon>Magnoliopsida</taxon>
        <taxon>Liliopsida</taxon>
        <taxon>Asparagales</taxon>
        <taxon>Orchidaceae</taxon>
        <taxon>Vanilloideae</taxon>
        <taxon>Vanilleae</taxon>
        <taxon>Vanilla</taxon>
    </lineage>
</organism>
<keyword id="KW-0150">Chloroplast</keyword>
<keyword id="KW-1015">Disulfide bond</keyword>
<keyword id="KW-0325">Glycoprotein</keyword>
<keyword id="KW-0456">Lyase</keyword>
<keyword id="KW-0934">Plastid</keyword>
<keyword id="KW-1185">Reference proteome</keyword>
<keyword id="KW-0809">Transit peptide</keyword>
<protein>
    <recommendedName>
        <fullName evidence="9 10">Vanillin synthase, chloroplastic</fullName>
        <shortName evidence="12">Ferulate hydratase/lyase</shortName>
        <shortName evidence="9 10">VpVAN</shortName>
        <ecNumber evidence="7 8">4.1.2.65</ecNumber>
    </recommendedName>
</protein>
<reference key="1">
    <citation type="journal article" date="2014" name="Nat. Commun.">
        <title>Vanillin formation from ferulic acid in Vanilla planifolia is catalysed by a single enzyme.</title>
        <authorList>
            <person name="Gallage N.J."/>
            <person name="Hansen E.H."/>
            <person name="Kannangara R."/>
            <person name="Olsen C.E."/>
            <person name="Motawia M.S."/>
            <person name="Joergensen K."/>
            <person name="Holme I."/>
            <person name="Hebelstrup K."/>
            <person name="Grisoni M."/>
            <person name="Moeller B.L."/>
        </authorList>
    </citation>
    <scope>NUCLEOTIDE SEQUENCE [MRNA]</scope>
    <scope>FUNCTION</scope>
    <scope>CATALYTIC ACTIVITY</scope>
    <scope>TISSUE SPECIFICITY</scope>
    <scope>PATHWAY</scope>
    <scope>BIOTECHNOLOGY</scope>
    <source>
        <tissue>Pod</tissue>
    </source>
</reference>
<reference key="2">
    <citation type="journal article" date="2018" name="Plant Cell Physiol.">
        <title>The intracellular localization of the vanillin biosynthetic machinery in pods of Vanilla planifolia.</title>
        <authorList>
            <person name="Gallage N.J."/>
            <person name="Joergensen K."/>
            <person name="Janfelt C."/>
            <person name="Nielsen A.J.Z."/>
            <person name="Naake T."/>
            <person name="Dunski E."/>
            <person name="Dalsten L."/>
            <person name="Grisoni M."/>
            <person name="Moeller B.L."/>
        </authorList>
    </citation>
    <scope>FUNCTION</scope>
    <scope>CATALYTIC ACTIVITY</scope>
    <scope>PATHWAY</scope>
    <scope>SUBCELLULAR LOCATION</scope>
    <scope>PROTEOLYTIC CLEAVAGE</scope>
    <scope>TISSUE SPECIFICITY</scope>
    <scope>SUBUNIT</scope>
</reference>
<reference key="3">
    <citation type="journal article" date="2020" name="Nat. Food">
        <title>A phased Vanilla planifolia genome enables genetic improvement of flavour and production.</title>
        <authorList>
            <person name="Hasing T."/>
            <person name="Tang H."/>
            <person name="Brym M."/>
            <person name="Khazi F."/>
            <person name="Huang T."/>
            <person name="Chambers A.H."/>
        </authorList>
    </citation>
    <scope>NUCLEOTIDE SEQUENCE [LARGE SCALE GENOMIC DNA]</scope>
    <source>
        <strain>cv. Daphna</strain>
        <tissue>Leaf</tissue>
    </source>
</reference>
<feature type="transit peptide" description="Chloroplast" evidence="11">
    <location>
        <begin position="1"/>
        <end status="unknown"/>
    </location>
</feature>
<feature type="propeptide" id="PRO_0000458826" description="Activation peptide" evidence="8">
    <location>
        <begin status="unknown"/>
        <end position="137"/>
    </location>
</feature>
<feature type="chain" id="PRO_5036292888" description="Vanillin synthase, chloroplastic">
    <location>
        <begin position="138"/>
        <end position="356"/>
    </location>
</feature>
<feature type="active site" evidence="4">
    <location>
        <position position="162"/>
    </location>
</feature>
<feature type="active site" evidence="5">
    <location>
        <position position="302"/>
    </location>
</feature>
<feature type="active site" evidence="6">
    <location>
        <position position="322"/>
    </location>
</feature>
<feature type="glycosylation site" description="N-linked (GlcNAc...) asparagine" evidence="3">
    <location>
        <position position="122"/>
    </location>
</feature>
<feature type="glycosylation site" description="N-linked (GlcNAc...) asparagine" evidence="3">
    <location>
        <position position="251"/>
    </location>
</feature>
<feature type="disulfide bond" evidence="1">
    <location>
        <begin position="159"/>
        <end position="202"/>
    </location>
</feature>
<feature type="disulfide bond" evidence="2">
    <location>
        <begin position="193"/>
        <end position="235"/>
    </location>
</feature>
<feature type="disulfide bond" evidence="2">
    <location>
        <begin position="293"/>
        <end position="343"/>
    </location>
</feature>
<name>VANSY_VANPL</name>
<gene>
    <name evidence="9" type="primary">VAN</name>
    <name evidence="14" type="ORF">HPP92_025938</name>
    <name evidence="13" type="ORF">HPP92_026221</name>
</gene>
<proteinExistence type="evidence at protein level"/>
<dbReference type="EC" id="4.1.2.65" evidence="7 8"/>
<dbReference type="EMBL" id="KP278240">
    <property type="protein sequence ID" value="AKG47593.1"/>
    <property type="molecule type" value="mRNA"/>
</dbReference>
<dbReference type="EMBL" id="JADCNM010000041">
    <property type="protein sequence ID" value="KAG0451927.1"/>
    <property type="molecule type" value="Genomic_DNA"/>
</dbReference>
<dbReference type="EMBL" id="JADCNL010000041">
    <property type="protein sequence ID" value="KAG0451853.1"/>
    <property type="status" value="ALT_SEQ"/>
    <property type="molecule type" value="Genomic_DNA"/>
</dbReference>
<dbReference type="SMR" id="A0A0F7G352"/>
<dbReference type="KEGG" id="ag:AKG47593"/>
<dbReference type="OrthoDB" id="10253408at2759"/>
<dbReference type="BRENDA" id="4.1.2.B12">
    <property type="organism ID" value="6598"/>
</dbReference>
<dbReference type="UniPathway" id="UPA00711"/>
<dbReference type="Proteomes" id="UP000636800">
    <property type="component" value="Unassembled WGS sequence"/>
</dbReference>
<dbReference type="Proteomes" id="UP000639772">
    <property type="component" value="Unassembled WGS sequence"/>
</dbReference>
<dbReference type="GO" id="GO:0009507">
    <property type="term" value="C:chloroplast"/>
    <property type="evidence" value="ECO:0000314"/>
    <property type="project" value="UniProtKB"/>
</dbReference>
<dbReference type="GO" id="GO:0062116">
    <property type="term" value="C:phenyloplast"/>
    <property type="evidence" value="ECO:0000314"/>
    <property type="project" value="UniProtKB"/>
</dbReference>
<dbReference type="GO" id="GO:0008234">
    <property type="term" value="F:cysteine-type peptidase activity"/>
    <property type="evidence" value="ECO:0007669"/>
    <property type="project" value="InterPro"/>
</dbReference>
<dbReference type="GO" id="GO:0050547">
    <property type="term" value="F:feruloyl-CoA hydratase/lyase activity"/>
    <property type="evidence" value="ECO:0000314"/>
    <property type="project" value="UniProtKB"/>
</dbReference>
<dbReference type="GO" id="GO:0042802">
    <property type="term" value="F:identical protein binding"/>
    <property type="evidence" value="ECO:0000314"/>
    <property type="project" value="UniProtKB"/>
</dbReference>
<dbReference type="GO" id="GO:0042803">
    <property type="term" value="F:protein homodimerization activity"/>
    <property type="evidence" value="ECO:0000314"/>
    <property type="project" value="UniProtKB"/>
</dbReference>
<dbReference type="GO" id="GO:0009699">
    <property type="term" value="P:phenylpropanoid biosynthetic process"/>
    <property type="evidence" value="ECO:0000314"/>
    <property type="project" value="UniProtKB"/>
</dbReference>
<dbReference type="GO" id="GO:0006508">
    <property type="term" value="P:proteolysis"/>
    <property type="evidence" value="ECO:0007669"/>
    <property type="project" value="InterPro"/>
</dbReference>
<dbReference type="GO" id="GO:0042189">
    <property type="term" value="P:vanillin biosynthetic process"/>
    <property type="evidence" value="ECO:0000314"/>
    <property type="project" value="UniProtKB"/>
</dbReference>
<dbReference type="CDD" id="cd02248">
    <property type="entry name" value="Peptidase_C1A"/>
    <property type="match status" value="1"/>
</dbReference>
<dbReference type="FunFam" id="3.90.70.10:FF:000039">
    <property type="entry name" value="Cysteine proteinase 2, putative"/>
    <property type="match status" value="1"/>
</dbReference>
<dbReference type="Gene3D" id="3.90.70.10">
    <property type="entry name" value="Cysteine proteinases"/>
    <property type="match status" value="1"/>
</dbReference>
<dbReference type="InterPro" id="IPR038765">
    <property type="entry name" value="Papain-like_cys_pep_sf"/>
</dbReference>
<dbReference type="InterPro" id="IPR025661">
    <property type="entry name" value="Pept_asp_AS"/>
</dbReference>
<dbReference type="InterPro" id="IPR000169">
    <property type="entry name" value="Pept_cys_AS"/>
</dbReference>
<dbReference type="InterPro" id="IPR025660">
    <property type="entry name" value="Pept_his_AS"/>
</dbReference>
<dbReference type="InterPro" id="IPR013128">
    <property type="entry name" value="Peptidase_C1A"/>
</dbReference>
<dbReference type="InterPro" id="IPR000668">
    <property type="entry name" value="Peptidase_C1A_C"/>
</dbReference>
<dbReference type="InterPro" id="IPR039417">
    <property type="entry name" value="Peptidase_C1A_papain-like"/>
</dbReference>
<dbReference type="InterPro" id="IPR013201">
    <property type="entry name" value="Prot_inhib_I29"/>
</dbReference>
<dbReference type="PANTHER" id="PTHR12411">
    <property type="entry name" value="CYSTEINE PROTEASE FAMILY C1-RELATED"/>
    <property type="match status" value="1"/>
</dbReference>
<dbReference type="Pfam" id="PF08246">
    <property type="entry name" value="Inhibitor_I29"/>
    <property type="match status" value="1"/>
</dbReference>
<dbReference type="Pfam" id="PF00112">
    <property type="entry name" value="Peptidase_C1"/>
    <property type="match status" value="1"/>
</dbReference>
<dbReference type="PRINTS" id="PR00705">
    <property type="entry name" value="PAPAIN"/>
</dbReference>
<dbReference type="SMART" id="SM00848">
    <property type="entry name" value="Inhibitor_I29"/>
    <property type="match status" value="1"/>
</dbReference>
<dbReference type="SMART" id="SM00645">
    <property type="entry name" value="Pept_C1"/>
    <property type="match status" value="1"/>
</dbReference>
<dbReference type="SUPFAM" id="SSF54001">
    <property type="entry name" value="Cysteine proteinases"/>
    <property type="match status" value="1"/>
</dbReference>
<dbReference type="PROSITE" id="PS00640">
    <property type="entry name" value="THIOL_PROTEASE_ASN"/>
    <property type="match status" value="1"/>
</dbReference>
<dbReference type="PROSITE" id="PS00139">
    <property type="entry name" value="THIOL_PROTEASE_CYS"/>
    <property type="match status" value="1"/>
</dbReference>
<dbReference type="PROSITE" id="PS00639">
    <property type="entry name" value="THIOL_PROTEASE_HIS"/>
    <property type="match status" value="1"/>
</dbReference>
<evidence type="ECO:0000250" key="1">
    <source>
        <dbReference type="UniProtKB" id="P07858"/>
    </source>
</evidence>
<evidence type="ECO:0000250" key="2">
    <source>
        <dbReference type="UniProtKB" id="P25250"/>
    </source>
</evidence>
<evidence type="ECO:0000255" key="3">
    <source>
        <dbReference type="PROSITE-ProRule" id="PRU00498"/>
    </source>
</evidence>
<evidence type="ECO:0000255" key="4">
    <source>
        <dbReference type="PROSITE-ProRule" id="PRU10088"/>
    </source>
</evidence>
<evidence type="ECO:0000255" key="5">
    <source>
        <dbReference type="PROSITE-ProRule" id="PRU10089"/>
    </source>
</evidence>
<evidence type="ECO:0000255" key="6">
    <source>
        <dbReference type="PROSITE-ProRule" id="PRU10090"/>
    </source>
</evidence>
<evidence type="ECO:0000269" key="7">
    <source>
    </source>
</evidence>
<evidence type="ECO:0000269" key="8">
    <source>
    </source>
</evidence>
<evidence type="ECO:0000303" key="9">
    <source>
    </source>
</evidence>
<evidence type="ECO:0000303" key="10">
    <source>
    </source>
</evidence>
<evidence type="ECO:0000305" key="11"/>
<evidence type="ECO:0000305" key="12">
    <source>
    </source>
</evidence>
<evidence type="ECO:0000312" key="13">
    <source>
        <dbReference type="EMBL" id="KAG0451853.1"/>
    </source>
</evidence>
<evidence type="ECO:0000312" key="14">
    <source>
        <dbReference type="EMBL" id="KAG0451927.1"/>
    </source>
</evidence>
<sequence length="356" mass="39031">MAAKLLFFLLFLVSALSVALAGFEEDNPIRSVTQRPDSIEPAILGVLGSCRHAFHFARFARRYGKSYGSEEEIKKRFGIFVENLAFIRSTNRKDLSYTLGINQFADLTWEEFRTNRLGAAQNCSATAHGNHRFVDGVLPVTRDWREQGIVSPVKDQGSCGSCWTFSTTGALEAAYTQLTGKSTSLSEQQLVDCASAFNNFGCNGGLPSQAFEYVKYNGGIDTEQTYPYLGVNGICNFKQENVGVKVIDSINITLGAEDELKHAVGLVRPVSVAFEVVKGFNLYKKGVYSSDTCGRDPMDVNHAVLAVGYGVEDGIPYWLIKNSWGTNWGDNGYFKMELGKNMCGVATCASYPIVAV</sequence>
<accession>A0A0F7G352</accession>
<accession>A0A835U813</accession>
<comment type="function">
    <text evidence="7 8">Involved in the biosynthesis of vanillin (4-hydroxy-3-methoxy-benzaldehyde) and derivative natural products, key components of vanilla pods flavor (PubMed:24941968, PubMed:29186560). Catalyzes the double carbon bond cleavage of ferulic acid to vanillin and of their respective glucosides via a coupled non-oxidative hydratase/lyase reaction (PubMed:24941968, PubMed:29186560). Inactive toward p-coumaric acid, caffeic acid and their glucosides derivatives (PubMed:24941968).</text>
</comment>
<comment type="catalytic activity">
    <reaction evidence="7 8">
        <text>(E)-ferulate + H2O = vanillin + acetate</text>
        <dbReference type="Rhea" id="RHEA:76491"/>
        <dbReference type="ChEBI" id="CHEBI:15377"/>
        <dbReference type="ChEBI" id="CHEBI:18346"/>
        <dbReference type="ChEBI" id="CHEBI:29749"/>
        <dbReference type="ChEBI" id="CHEBI:30089"/>
        <dbReference type="EC" id="4.1.2.65"/>
    </reaction>
    <physiologicalReaction direction="left-to-right" evidence="7 8">
        <dbReference type="Rhea" id="RHEA:76492"/>
    </physiologicalReaction>
</comment>
<comment type="catalytic activity">
    <reaction evidence="7 8">
        <text>4-O-beta-D-glucosyl-trans-ferulate + H2O = 4-O-beta-D-glucosyl-vanillin + acetate</text>
        <dbReference type="Rhea" id="RHEA:76503"/>
        <dbReference type="ChEBI" id="CHEBI:15377"/>
        <dbReference type="ChEBI" id="CHEBI:30089"/>
        <dbReference type="ChEBI" id="CHEBI:141767"/>
        <dbReference type="ChEBI" id="CHEBI:179508"/>
        <dbReference type="EC" id="4.1.2.65"/>
    </reaction>
    <physiologicalReaction direction="left-to-right" evidence="7 8">
        <dbReference type="Rhea" id="RHEA:76504"/>
    </physiologicalReaction>
</comment>
<comment type="pathway">
    <text evidence="7 8">Aromatic compound metabolism; phenylpropanoid biosynthesis.</text>
</comment>
<comment type="subunit">
    <text evidence="8">Forms homodimers, homotrimers and homotetramers.</text>
</comment>
<comment type="subcellular location">
    <subcellularLocation>
        <location evidence="8">Plastid</location>
        <location evidence="8">Chloroplast</location>
    </subcellularLocation>
    <text evidence="8">Localized in chloroplasts and re-differentiated chloroplasts termed phenyloplasts during pod development.</text>
</comment>
<comment type="tissue specificity">
    <text evidence="7 8">Accumulates in the inner part of vanilla pods (at protein level) (PubMed:24941968, PubMed:29186560). Expressed in single cells located a few cell layers from the inner epidermis (PubMed:24941968).</text>
</comment>
<comment type="biotechnology">
    <text evidence="7">Heterologous expression of VAN in yeast leads to the production of vanillin and vanillin glucoside flavors at low cost.</text>
</comment>
<comment type="similarity">
    <text evidence="4 5 6">Belongs to the peptidase C1 family.</text>
</comment>
<comment type="sequence caution" evidence="11">
    <conflict type="erroneous gene model prediction"/>
</comment>